<protein>
    <recommendedName>
        <fullName evidence="1">Galactokinase</fullName>
        <ecNumber evidence="1">2.7.1.6</ecNumber>
    </recommendedName>
    <alternativeName>
        <fullName evidence="1">Galactose kinase</fullName>
    </alternativeName>
</protein>
<organism>
    <name type="scientific">Clostridium beijerinckii (strain ATCC 51743 / NCIMB 8052)</name>
    <name type="common">Clostridium acetobutylicum</name>
    <dbReference type="NCBI Taxonomy" id="290402"/>
    <lineage>
        <taxon>Bacteria</taxon>
        <taxon>Bacillati</taxon>
        <taxon>Bacillota</taxon>
        <taxon>Clostridia</taxon>
        <taxon>Eubacteriales</taxon>
        <taxon>Clostridiaceae</taxon>
        <taxon>Clostridium</taxon>
    </lineage>
</organism>
<gene>
    <name evidence="1" type="primary">galK</name>
    <name type="ordered locus">Cbei_4419</name>
</gene>
<keyword id="KW-0067">ATP-binding</keyword>
<keyword id="KW-0119">Carbohydrate metabolism</keyword>
<keyword id="KW-0963">Cytoplasm</keyword>
<keyword id="KW-0299">Galactose metabolism</keyword>
<keyword id="KW-0418">Kinase</keyword>
<keyword id="KW-0460">Magnesium</keyword>
<keyword id="KW-0479">Metal-binding</keyword>
<keyword id="KW-0547">Nucleotide-binding</keyword>
<keyword id="KW-0808">Transferase</keyword>
<feature type="chain" id="PRO_1000078406" description="Galactokinase">
    <location>
        <begin position="1"/>
        <end position="389"/>
    </location>
</feature>
<feature type="active site" description="Proton acceptor" evidence="1">
    <location>
        <position position="175"/>
    </location>
</feature>
<feature type="binding site" evidence="1">
    <location>
        <begin position="34"/>
        <end position="37"/>
    </location>
    <ligand>
        <name>substrate</name>
    </ligand>
</feature>
<feature type="binding site" evidence="1">
    <location>
        <position position="68"/>
    </location>
    <ligand>
        <name>ATP</name>
        <dbReference type="ChEBI" id="CHEBI:30616"/>
    </ligand>
</feature>
<feature type="binding site" evidence="1">
    <location>
        <begin position="125"/>
        <end position="131"/>
    </location>
    <ligand>
        <name>ATP</name>
        <dbReference type="ChEBI" id="CHEBI:30616"/>
    </ligand>
</feature>
<feature type="binding site" evidence="1">
    <location>
        <position position="131"/>
    </location>
    <ligand>
        <name>Mg(2+)</name>
        <dbReference type="ChEBI" id="CHEBI:18420"/>
    </ligand>
</feature>
<feature type="binding site" evidence="1">
    <location>
        <position position="163"/>
    </location>
    <ligand>
        <name>Mg(2+)</name>
        <dbReference type="ChEBI" id="CHEBI:18420"/>
    </ligand>
</feature>
<feature type="binding site" evidence="1">
    <location>
        <position position="225"/>
    </location>
    <ligand>
        <name>substrate</name>
    </ligand>
</feature>
<feature type="site" description="Transition state stabilizer" evidence="1">
    <location>
        <position position="28"/>
    </location>
</feature>
<evidence type="ECO:0000255" key="1">
    <source>
        <dbReference type="HAMAP-Rule" id="MF_00246"/>
    </source>
</evidence>
<proteinExistence type="inferred from homology"/>
<sequence>MENINVLKSDFTKLFAKDAESVFFSPGRVNLIGEHTDYNGGNVFPCALTIGTYALVRQREDKNVLVNSLNFKELGILEFSLENMIYEKQHDWANYPKGVIKTFENHGYNIPNGFEILFYGNIPNGSGLSSSASIEVLMGTILNDLFNLNINMVDIVKMCQEAENKFIGVNCGIMDQFAIGMGKENCAILLDCNTLKYSYSTIAMDGYKIVIANTNKKRGLADSKYNERRSECETALAEIQKVKNINALGELTEEEFEEVKSCISDPIKAKRAKHAVYENRRTLKAVKALEENDLTLFGKLMNDSHISLRDDYEVTGIELDTLVSLAWKSEGVIGARMTGAGFGGCTVNIVKEDCIDSFVEKVKAEYTSKIGYEPSFYVVSISDGTRKIG</sequence>
<comment type="function">
    <text evidence="1">Catalyzes the transfer of the gamma-phosphate of ATP to D-galactose to form alpha-D-galactose-1-phosphate (Gal-1-P).</text>
</comment>
<comment type="catalytic activity">
    <reaction evidence="1">
        <text>alpha-D-galactose + ATP = alpha-D-galactose 1-phosphate + ADP + H(+)</text>
        <dbReference type="Rhea" id="RHEA:13553"/>
        <dbReference type="ChEBI" id="CHEBI:15378"/>
        <dbReference type="ChEBI" id="CHEBI:28061"/>
        <dbReference type="ChEBI" id="CHEBI:30616"/>
        <dbReference type="ChEBI" id="CHEBI:58336"/>
        <dbReference type="ChEBI" id="CHEBI:456216"/>
        <dbReference type="EC" id="2.7.1.6"/>
    </reaction>
</comment>
<comment type="pathway">
    <text evidence="1">Carbohydrate metabolism; galactose metabolism.</text>
</comment>
<comment type="subcellular location">
    <subcellularLocation>
        <location evidence="1">Cytoplasm</location>
    </subcellularLocation>
</comment>
<comment type="similarity">
    <text evidence="1">Belongs to the GHMP kinase family. GalK subfamily.</text>
</comment>
<accession>A6M1P8</accession>
<name>GAL1_CLOB8</name>
<dbReference type="EC" id="2.7.1.6" evidence="1"/>
<dbReference type="EMBL" id="CP000721">
    <property type="protein sequence ID" value="ABR36528.1"/>
    <property type="molecule type" value="Genomic_DNA"/>
</dbReference>
<dbReference type="RefSeq" id="WP_012060575.1">
    <property type="nucleotide sequence ID" value="NC_009617.1"/>
</dbReference>
<dbReference type="SMR" id="A6M1P8"/>
<dbReference type="KEGG" id="cbe:Cbei_4419"/>
<dbReference type="eggNOG" id="COG0153">
    <property type="taxonomic scope" value="Bacteria"/>
</dbReference>
<dbReference type="HOGENOM" id="CLU_017814_2_1_9"/>
<dbReference type="UniPathway" id="UPA00214"/>
<dbReference type="Proteomes" id="UP000000565">
    <property type="component" value="Chromosome"/>
</dbReference>
<dbReference type="GO" id="GO:0005829">
    <property type="term" value="C:cytosol"/>
    <property type="evidence" value="ECO:0007669"/>
    <property type="project" value="TreeGrafter"/>
</dbReference>
<dbReference type="GO" id="GO:0005524">
    <property type="term" value="F:ATP binding"/>
    <property type="evidence" value="ECO:0007669"/>
    <property type="project" value="UniProtKB-UniRule"/>
</dbReference>
<dbReference type="GO" id="GO:0004335">
    <property type="term" value="F:galactokinase activity"/>
    <property type="evidence" value="ECO:0007669"/>
    <property type="project" value="UniProtKB-UniRule"/>
</dbReference>
<dbReference type="GO" id="GO:0000287">
    <property type="term" value="F:magnesium ion binding"/>
    <property type="evidence" value="ECO:0007669"/>
    <property type="project" value="UniProtKB-UniRule"/>
</dbReference>
<dbReference type="GO" id="GO:0006012">
    <property type="term" value="P:galactose metabolic process"/>
    <property type="evidence" value="ECO:0007669"/>
    <property type="project" value="UniProtKB-UniRule"/>
</dbReference>
<dbReference type="FunFam" id="3.30.230.10:FF:000017">
    <property type="entry name" value="Galactokinase"/>
    <property type="match status" value="1"/>
</dbReference>
<dbReference type="FunFam" id="3.30.70.890:FF:000001">
    <property type="entry name" value="Galactokinase"/>
    <property type="match status" value="1"/>
</dbReference>
<dbReference type="Gene3D" id="3.30.230.10">
    <property type="match status" value="1"/>
</dbReference>
<dbReference type="Gene3D" id="3.30.70.890">
    <property type="entry name" value="GHMP kinase, C-terminal domain"/>
    <property type="match status" value="1"/>
</dbReference>
<dbReference type="HAMAP" id="MF_00246">
    <property type="entry name" value="Galactokinase"/>
    <property type="match status" value="1"/>
</dbReference>
<dbReference type="InterPro" id="IPR000705">
    <property type="entry name" value="Galactokinase"/>
</dbReference>
<dbReference type="InterPro" id="IPR022963">
    <property type="entry name" value="Galactokinase_bac"/>
</dbReference>
<dbReference type="InterPro" id="IPR019741">
    <property type="entry name" value="Galactokinase_CS"/>
</dbReference>
<dbReference type="InterPro" id="IPR019539">
    <property type="entry name" value="GalKase_N"/>
</dbReference>
<dbReference type="InterPro" id="IPR013750">
    <property type="entry name" value="GHMP_kinase_C_dom"/>
</dbReference>
<dbReference type="InterPro" id="IPR036554">
    <property type="entry name" value="GHMP_kinase_C_sf"/>
</dbReference>
<dbReference type="InterPro" id="IPR006204">
    <property type="entry name" value="GHMP_kinase_N_dom"/>
</dbReference>
<dbReference type="InterPro" id="IPR006203">
    <property type="entry name" value="GHMP_knse_ATP-bd_CS"/>
</dbReference>
<dbReference type="InterPro" id="IPR006206">
    <property type="entry name" value="Mevalonate/galactokinase"/>
</dbReference>
<dbReference type="InterPro" id="IPR020568">
    <property type="entry name" value="Ribosomal_Su5_D2-typ_SF"/>
</dbReference>
<dbReference type="InterPro" id="IPR014721">
    <property type="entry name" value="Ribsml_uS5_D2-typ_fold_subgr"/>
</dbReference>
<dbReference type="NCBIfam" id="TIGR00131">
    <property type="entry name" value="gal_kin"/>
    <property type="match status" value="1"/>
</dbReference>
<dbReference type="NCBIfam" id="NF003705">
    <property type="entry name" value="PRK05322.1"/>
    <property type="match status" value="1"/>
</dbReference>
<dbReference type="PANTHER" id="PTHR10457:SF7">
    <property type="entry name" value="GALACTOKINASE-RELATED"/>
    <property type="match status" value="1"/>
</dbReference>
<dbReference type="PANTHER" id="PTHR10457">
    <property type="entry name" value="MEVALONATE KINASE/GALACTOKINASE"/>
    <property type="match status" value="1"/>
</dbReference>
<dbReference type="Pfam" id="PF10509">
    <property type="entry name" value="GalKase_gal_bdg"/>
    <property type="match status" value="1"/>
</dbReference>
<dbReference type="Pfam" id="PF08544">
    <property type="entry name" value="GHMP_kinases_C"/>
    <property type="match status" value="1"/>
</dbReference>
<dbReference type="Pfam" id="PF00288">
    <property type="entry name" value="GHMP_kinases_N"/>
    <property type="match status" value="1"/>
</dbReference>
<dbReference type="PIRSF" id="PIRSF000530">
    <property type="entry name" value="Galactokinase"/>
    <property type="match status" value="1"/>
</dbReference>
<dbReference type="PRINTS" id="PR00473">
    <property type="entry name" value="GALCTOKINASE"/>
</dbReference>
<dbReference type="PRINTS" id="PR00959">
    <property type="entry name" value="MEVGALKINASE"/>
</dbReference>
<dbReference type="SUPFAM" id="SSF55060">
    <property type="entry name" value="GHMP Kinase, C-terminal domain"/>
    <property type="match status" value="1"/>
</dbReference>
<dbReference type="SUPFAM" id="SSF54211">
    <property type="entry name" value="Ribosomal protein S5 domain 2-like"/>
    <property type="match status" value="1"/>
</dbReference>
<dbReference type="PROSITE" id="PS00106">
    <property type="entry name" value="GALACTOKINASE"/>
    <property type="match status" value="1"/>
</dbReference>
<dbReference type="PROSITE" id="PS00627">
    <property type="entry name" value="GHMP_KINASES_ATP"/>
    <property type="match status" value="1"/>
</dbReference>
<reference key="1">
    <citation type="submission" date="2007-06" db="EMBL/GenBank/DDBJ databases">
        <title>Complete sequence of Clostridium beijerinckii NCIMB 8052.</title>
        <authorList>
            <consortium name="US DOE Joint Genome Institute"/>
            <person name="Copeland A."/>
            <person name="Lucas S."/>
            <person name="Lapidus A."/>
            <person name="Barry K."/>
            <person name="Detter J.C."/>
            <person name="Glavina del Rio T."/>
            <person name="Hammon N."/>
            <person name="Israni S."/>
            <person name="Dalin E."/>
            <person name="Tice H."/>
            <person name="Pitluck S."/>
            <person name="Sims D."/>
            <person name="Brettin T."/>
            <person name="Bruce D."/>
            <person name="Tapia R."/>
            <person name="Brainard J."/>
            <person name="Schmutz J."/>
            <person name="Larimer F."/>
            <person name="Land M."/>
            <person name="Hauser L."/>
            <person name="Kyrpides N."/>
            <person name="Mikhailova N."/>
            <person name="Bennet G."/>
            <person name="Cann I."/>
            <person name="Chen J.-S."/>
            <person name="Contreras A.L."/>
            <person name="Jones D."/>
            <person name="Kashket E."/>
            <person name="Mitchell W."/>
            <person name="Stoddard S."/>
            <person name="Schwarz W."/>
            <person name="Qureshi N."/>
            <person name="Young M."/>
            <person name="Shi Z."/>
            <person name="Ezeji T."/>
            <person name="White B."/>
            <person name="Blaschek H."/>
            <person name="Richardson P."/>
        </authorList>
    </citation>
    <scope>NUCLEOTIDE SEQUENCE [LARGE SCALE GENOMIC DNA]</scope>
    <source>
        <strain>ATCC 51743 / NCIMB 8052</strain>
    </source>
</reference>